<dbReference type="EC" id="2.7.3.2"/>
<dbReference type="EMBL" id="J05401">
    <property type="protein sequence ID" value="AAA60561.1"/>
    <property type="molecule type" value="mRNA"/>
</dbReference>
<dbReference type="EMBL" id="CR450315">
    <property type="protein sequence ID" value="CAG29311.1"/>
    <property type="molecule type" value="mRNA"/>
</dbReference>
<dbReference type="EMBL" id="BC029140">
    <property type="protein sequence ID" value="AAH29140.1"/>
    <property type="molecule type" value="mRNA"/>
</dbReference>
<dbReference type="CCDS" id="CCDS4053.1"/>
<dbReference type="PIR" id="A35756">
    <property type="entry name" value="A35756"/>
</dbReference>
<dbReference type="RefSeq" id="NP_001093205.1">
    <property type="nucleotide sequence ID" value="NM_001099735.2"/>
</dbReference>
<dbReference type="RefSeq" id="NP_001093206.1">
    <property type="nucleotide sequence ID" value="NM_001099736.2"/>
</dbReference>
<dbReference type="RefSeq" id="NP_001816.2">
    <property type="nucleotide sequence ID" value="NM_001825.3"/>
</dbReference>
<dbReference type="PDB" id="4Z9M">
    <property type="method" value="X-ray"/>
    <property type="resolution" value="2.10 A"/>
    <property type="chains" value="A/B/C/D/E/F/G/H=27-416"/>
</dbReference>
<dbReference type="PDBsum" id="4Z9M"/>
<dbReference type="SMR" id="P17540"/>
<dbReference type="BioGRID" id="107580">
    <property type="interactions" value="54"/>
</dbReference>
<dbReference type="FunCoup" id="P17540">
    <property type="interactions" value="342"/>
</dbReference>
<dbReference type="IntAct" id="P17540">
    <property type="interactions" value="24"/>
</dbReference>
<dbReference type="STRING" id="9606.ENSP00000404203"/>
<dbReference type="DrugBank" id="DB00787">
    <property type="generic name" value="Acyclovir"/>
</dbReference>
<dbReference type="DrugBank" id="DB00148">
    <property type="generic name" value="Creatine"/>
</dbReference>
<dbReference type="DrugBank" id="DB13191">
    <property type="generic name" value="Phosphocreatine"/>
</dbReference>
<dbReference type="DrugBank" id="DB00300">
    <property type="generic name" value="Tenofovir disoproxil"/>
</dbReference>
<dbReference type="GlyGen" id="P17540">
    <property type="glycosylation" value="1 site, 1 O-linked glycan (1 site)"/>
</dbReference>
<dbReference type="iPTMnet" id="P17540"/>
<dbReference type="PhosphoSitePlus" id="P17540"/>
<dbReference type="BioMuta" id="CKMT2"/>
<dbReference type="DMDM" id="116242603"/>
<dbReference type="jPOST" id="P17540"/>
<dbReference type="MassIVE" id="P17540"/>
<dbReference type="PaxDb" id="9606-ENSP00000404203"/>
<dbReference type="PeptideAtlas" id="P17540"/>
<dbReference type="ProteomicsDB" id="53483"/>
<dbReference type="Antibodypedia" id="12782">
    <property type="antibodies" value="419 antibodies from 34 providers"/>
</dbReference>
<dbReference type="DNASU" id="1160"/>
<dbReference type="Ensembl" id="ENST00000254035.9">
    <property type="protein sequence ID" value="ENSP00000254035.4"/>
    <property type="gene ID" value="ENSG00000131730.16"/>
</dbReference>
<dbReference type="Ensembl" id="ENST00000424301.6">
    <property type="protein sequence ID" value="ENSP00000404203.2"/>
    <property type="gene ID" value="ENSG00000131730.16"/>
</dbReference>
<dbReference type="Ensembl" id="ENST00000437669.5">
    <property type="protein sequence ID" value="ENSP00000410289.1"/>
    <property type="gene ID" value="ENSG00000131730.16"/>
</dbReference>
<dbReference type="GeneID" id="1160"/>
<dbReference type="KEGG" id="hsa:1160"/>
<dbReference type="MANE-Select" id="ENST00000254035.9">
    <property type="protein sequence ID" value="ENSP00000254035.4"/>
    <property type="RefSeq nucleotide sequence ID" value="NM_001099735.2"/>
    <property type="RefSeq protein sequence ID" value="NP_001093205.1"/>
</dbReference>
<dbReference type="UCSC" id="uc003khc.5">
    <property type="organism name" value="human"/>
</dbReference>
<dbReference type="AGR" id="HGNC:1996"/>
<dbReference type="CTD" id="1160"/>
<dbReference type="DisGeNET" id="1160"/>
<dbReference type="GeneCards" id="CKMT2"/>
<dbReference type="HGNC" id="HGNC:1996">
    <property type="gene designation" value="CKMT2"/>
</dbReference>
<dbReference type="HPA" id="ENSG00000131730">
    <property type="expression patterns" value="Group enriched (heart muscle, skeletal muscle, tongue)"/>
</dbReference>
<dbReference type="MIM" id="123295">
    <property type="type" value="gene"/>
</dbReference>
<dbReference type="neXtProt" id="NX_P17540"/>
<dbReference type="OpenTargets" id="ENSG00000131730"/>
<dbReference type="PharmGKB" id="PA26534"/>
<dbReference type="VEuPathDB" id="HostDB:ENSG00000131730"/>
<dbReference type="eggNOG" id="KOG3581">
    <property type="taxonomic scope" value="Eukaryota"/>
</dbReference>
<dbReference type="GeneTree" id="ENSGT00950000182772"/>
<dbReference type="HOGENOM" id="CLU_019868_4_2_1"/>
<dbReference type="InParanoid" id="P17540"/>
<dbReference type="OMA" id="YHGQEEN"/>
<dbReference type="OrthoDB" id="430219at2759"/>
<dbReference type="PAN-GO" id="P17540">
    <property type="GO annotations" value="3 GO annotations based on evolutionary models"/>
</dbReference>
<dbReference type="PhylomeDB" id="P17540"/>
<dbReference type="TreeFam" id="TF314214"/>
<dbReference type="BioCyc" id="MetaCyc:HS05555-MONOMER"/>
<dbReference type="PathwayCommons" id="P17540"/>
<dbReference type="Reactome" id="R-HSA-71288">
    <property type="pathway name" value="Creatine metabolism"/>
</dbReference>
<dbReference type="SignaLink" id="P17540"/>
<dbReference type="SIGNOR" id="P17540"/>
<dbReference type="BioGRID-ORCS" id="1160">
    <property type="hits" value="10 hits in 1153 CRISPR screens"/>
</dbReference>
<dbReference type="EvolutionaryTrace" id="P17540"/>
<dbReference type="GeneWiki" id="CKMT2"/>
<dbReference type="GenomeRNAi" id="1160"/>
<dbReference type="Pharos" id="P17540">
    <property type="development level" value="Tbio"/>
</dbReference>
<dbReference type="PRO" id="PR:P17540"/>
<dbReference type="Proteomes" id="UP000005640">
    <property type="component" value="Chromosome 5"/>
</dbReference>
<dbReference type="RNAct" id="P17540">
    <property type="molecule type" value="protein"/>
</dbReference>
<dbReference type="Bgee" id="ENSG00000131730">
    <property type="expression patterns" value="Expressed in heart right ventricle and 155 other cell types or tissues"/>
</dbReference>
<dbReference type="ExpressionAtlas" id="P17540">
    <property type="expression patterns" value="baseline and differential"/>
</dbReference>
<dbReference type="GO" id="GO:0005743">
    <property type="term" value="C:mitochondrial inner membrane"/>
    <property type="evidence" value="ECO:0000304"/>
    <property type="project" value="Reactome"/>
</dbReference>
<dbReference type="GO" id="GO:0005739">
    <property type="term" value="C:mitochondrion"/>
    <property type="evidence" value="ECO:0007005"/>
    <property type="project" value="UniProtKB"/>
</dbReference>
<dbReference type="GO" id="GO:0005524">
    <property type="term" value="F:ATP binding"/>
    <property type="evidence" value="ECO:0007669"/>
    <property type="project" value="UniProtKB-KW"/>
</dbReference>
<dbReference type="GO" id="GO:0004111">
    <property type="term" value="F:creatine kinase activity"/>
    <property type="evidence" value="ECO:0000318"/>
    <property type="project" value="GO_Central"/>
</dbReference>
<dbReference type="GO" id="GO:0006936">
    <property type="term" value="P:muscle contraction"/>
    <property type="evidence" value="ECO:0000304"/>
    <property type="project" value="ProtInc"/>
</dbReference>
<dbReference type="GO" id="GO:0046314">
    <property type="term" value="P:phosphocreatine biosynthetic process"/>
    <property type="evidence" value="ECO:0000318"/>
    <property type="project" value="GO_Central"/>
</dbReference>
<dbReference type="CDD" id="cd00716">
    <property type="entry name" value="creatine_kinase_like"/>
    <property type="match status" value="1"/>
</dbReference>
<dbReference type="FunFam" id="3.30.590.10:FF:000002">
    <property type="entry name" value="Creatine kinase S-type, mitochondrial"/>
    <property type="match status" value="1"/>
</dbReference>
<dbReference type="FunFam" id="1.10.135.10:FF:000002">
    <property type="entry name" value="creatine kinase S-type, mitochondrial"/>
    <property type="match status" value="1"/>
</dbReference>
<dbReference type="Gene3D" id="1.10.135.10">
    <property type="entry name" value="ATP:guanido phosphotransferase, N-terminal domain"/>
    <property type="match status" value="1"/>
</dbReference>
<dbReference type="Gene3D" id="3.30.590.10">
    <property type="entry name" value="Glutamine synthetase/guanido kinase, catalytic domain"/>
    <property type="match status" value="1"/>
</dbReference>
<dbReference type="InterPro" id="IPR000749">
    <property type="entry name" value="ATP-guanido_PTrfase"/>
</dbReference>
<dbReference type="InterPro" id="IPR022415">
    <property type="entry name" value="ATP-guanido_PTrfase_AS"/>
</dbReference>
<dbReference type="InterPro" id="IPR022414">
    <property type="entry name" value="ATP-guanido_PTrfase_cat"/>
</dbReference>
<dbReference type="InterPro" id="IPR022413">
    <property type="entry name" value="ATP-guanido_PTrfase_N"/>
</dbReference>
<dbReference type="InterPro" id="IPR036802">
    <property type="entry name" value="ATP-guanido_PTrfase_N_sf"/>
</dbReference>
<dbReference type="InterPro" id="IPR014746">
    <property type="entry name" value="Gln_synth/guanido_kin_cat_dom"/>
</dbReference>
<dbReference type="PANTHER" id="PTHR11547">
    <property type="entry name" value="ARGININE OR CREATINE KINASE"/>
    <property type="match status" value="1"/>
</dbReference>
<dbReference type="PANTHER" id="PTHR11547:SF19">
    <property type="entry name" value="CREATINE KINASE S-TYPE, MITOCHONDRIAL"/>
    <property type="match status" value="1"/>
</dbReference>
<dbReference type="Pfam" id="PF00217">
    <property type="entry name" value="ATP-gua_Ptrans"/>
    <property type="match status" value="1"/>
</dbReference>
<dbReference type="Pfam" id="PF02807">
    <property type="entry name" value="ATP-gua_PtransN"/>
    <property type="match status" value="1"/>
</dbReference>
<dbReference type="SUPFAM" id="SSF55931">
    <property type="entry name" value="Glutamine synthetase/guanido kinase"/>
    <property type="match status" value="1"/>
</dbReference>
<dbReference type="SUPFAM" id="SSF48034">
    <property type="entry name" value="Guanido kinase N-terminal domain"/>
    <property type="match status" value="1"/>
</dbReference>
<dbReference type="PROSITE" id="PS00112">
    <property type="entry name" value="PHOSPHAGEN_KINASE"/>
    <property type="match status" value="1"/>
</dbReference>
<dbReference type="PROSITE" id="PS51510">
    <property type="entry name" value="PHOSPHAGEN_KINASE_C"/>
    <property type="match status" value="1"/>
</dbReference>
<dbReference type="PROSITE" id="PS51509">
    <property type="entry name" value="PHOSPHAGEN_KINASE_N"/>
    <property type="match status" value="1"/>
</dbReference>
<feature type="transit peptide" description="Mitochondrion" evidence="7">
    <location>
        <begin position="1"/>
        <end position="39"/>
    </location>
</feature>
<feature type="chain" id="PRO_0000016594" description="Creatine kinase S-type, mitochondrial">
    <location>
        <begin position="40"/>
        <end position="419"/>
    </location>
</feature>
<feature type="domain" description="Phosphagen kinase N-terminal" evidence="4">
    <location>
        <begin position="46"/>
        <end position="132"/>
    </location>
</feature>
<feature type="domain" description="Phosphagen kinase C-terminal" evidence="5">
    <location>
        <begin position="159"/>
        <end position="401"/>
    </location>
</feature>
<feature type="region of interest" description="Cardiolipin-binding" evidence="1">
    <location>
        <begin position="40"/>
        <end position="64"/>
    </location>
</feature>
<feature type="binding site">
    <location>
        <begin position="162"/>
        <end position="166"/>
    </location>
    <ligand>
        <name>ATP</name>
        <dbReference type="ChEBI" id="CHEBI:30616"/>
    </ligand>
</feature>
<feature type="binding site">
    <location>
        <position position="225"/>
    </location>
    <ligand>
        <name>ATP</name>
        <dbReference type="ChEBI" id="CHEBI:30616"/>
    </ligand>
</feature>
<feature type="binding site" evidence="5">
    <location>
        <position position="270"/>
    </location>
    <ligand>
        <name>ATP</name>
        <dbReference type="ChEBI" id="CHEBI:30616"/>
    </ligand>
</feature>
<feature type="binding site">
    <location>
        <position position="326"/>
    </location>
    <ligand>
        <name>ATP</name>
        <dbReference type="ChEBI" id="CHEBI:30616"/>
    </ligand>
</feature>
<feature type="binding site">
    <location>
        <begin position="354"/>
        <end position="359"/>
    </location>
    <ligand>
        <name>ATP</name>
        <dbReference type="ChEBI" id="CHEBI:30616"/>
    </ligand>
</feature>
<feature type="binding site">
    <location>
        <position position="369"/>
    </location>
    <ligand>
        <name>ATP</name>
        <dbReference type="ChEBI" id="CHEBI:30616"/>
    </ligand>
</feature>
<feature type="modified residue" description="Phosphotyrosine" evidence="2">
    <location>
        <position position="255"/>
    </location>
</feature>
<feature type="modified residue" description="Phosphothreonine" evidence="3">
    <location>
        <position position="356"/>
    </location>
</feature>
<feature type="sequence conflict" description="In Ref. 1; AAA60561." evidence="9" ref="1">
    <original>A</original>
    <variation>S</variation>
    <location>
        <position position="74"/>
    </location>
</feature>
<feature type="helix" evidence="10">
    <location>
        <begin position="50"/>
        <end position="53"/>
    </location>
</feature>
<feature type="helix" evidence="10">
    <location>
        <begin position="63"/>
        <end position="67"/>
    </location>
</feature>
<feature type="helix" evidence="10">
    <location>
        <begin position="70"/>
        <end position="76"/>
    </location>
</feature>
<feature type="helix" evidence="10">
    <location>
        <begin position="87"/>
        <end position="96"/>
    </location>
</feature>
<feature type="strand" evidence="10">
    <location>
        <begin position="101"/>
        <end position="103"/>
    </location>
</feature>
<feature type="helix" evidence="10">
    <location>
        <begin position="115"/>
        <end position="118"/>
    </location>
</feature>
<feature type="helix" evidence="10">
    <location>
        <begin position="120"/>
        <end position="130"/>
    </location>
</feature>
<feature type="turn" evidence="10">
    <location>
        <begin position="131"/>
        <end position="133"/>
    </location>
</feature>
<feature type="turn" evidence="10">
    <location>
        <begin position="136"/>
        <end position="138"/>
    </location>
</feature>
<feature type="helix" evidence="10">
    <location>
        <begin position="147"/>
        <end position="149"/>
    </location>
</feature>
<feature type="turn" evidence="10">
    <location>
        <begin position="157"/>
        <end position="159"/>
    </location>
</feature>
<feature type="strand" evidence="10">
    <location>
        <begin position="160"/>
        <end position="169"/>
    </location>
</feature>
<feature type="turn" evidence="10">
    <location>
        <begin position="177"/>
        <end position="179"/>
    </location>
</feature>
<feature type="helix" evidence="10">
    <location>
        <begin position="182"/>
        <end position="196"/>
    </location>
</feature>
<feature type="helix" evidence="10">
    <location>
        <begin position="201"/>
        <end position="203"/>
    </location>
</feature>
<feature type="strand" evidence="10">
    <location>
        <begin position="205"/>
        <end position="209"/>
    </location>
</feature>
<feature type="helix" evidence="10">
    <location>
        <begin position="210"/>
        <end position="212"/>
    </location>
</feature>
<feature type="helix" evidence="10">
    <location>
        <begin position="215"/>
        <end position="223"/>
    </location>
</feature>
<feature type="helix" evidence="10">
    <location>
        <begin position="234"/>
        <end position="237"/>
    </location>
</feature>
<feature type="turn" evidence="10">
    <location>
        <begin position="238"/>
        <end position="248"/>
    </location>
</feature>
<feature type="strand" evidence="10">
    <location>
        <begin position="250"/>
        <end position="254"/>
    </location>
</feature>
<feature type="strand" evidence="10">
    <location>
        <begin position="257"/>
        <end position="278"/>
    </location>
</feature>
<feature type="helix" evidence="10">
    <location>
        <begin position="280"/>
        <end position="300"/>
    </location>
</feature>
<feature type="turn" evidence="10">
    <location>
        <begin position="309"/>
        <end position="311"/>
    </location>
</feature>
<feature type="helix" evidence="10">
    <location>
        <begin position="318"/>
        <end position="320"/>
    </location>
</feature>
<feature type="strand" evidence="10">
    <location>
        <begin position="326"/>
        <end position="332"/>
    </location>
</feature>
<feature type="helix" evidence="10">
    <location>
        <begin position="334"/>
        <end position="338"/>
    </location>
</feature>
<feature type="helix" evidence="10">
    <location>
        <begin position="342"/>
        <end position="348"/>
    </location>
</feature>
<feature type="strand" evidence="10">
    <location>
        <begin position="351"/>
        <end position="355"/>
    </location>
</feature>
<feature type="strand" evidence="10">
    <location>
        <begin position="367"/>
        <end position="373"/>
    </location>
</feature>
<feature type="strand" evidence="10">
    <location>
        <begin position="376"/>
        <end position="378"/>
    </location>
</feature>
<feature type="helix" evidence="10">
    <location>
        <begin position="380"/>
        <end position="396"/>
    </location>
</feature>
<feature type="helix" evidence="10">
    <location>
        <begin position="398"/>
        <end position="402"/>
    </location>
</feature>
<sequence>MASIFSKLLTGRNASLLFATMGTSVLTTGYLLNRQKVCAEVREQPRLFPPSADYPDLRKHNNCMAECLTPAIYAKLRNKVTPNGYTLDQCIQTGVDNPGHPFIKTVGMVAGDEESYEVFADLFDPVIKLRHNGYDPRVMKHTTDLDASKITQGQFDEHYVLSSRVRTGRSIRGLSLPPACTRAERREVENVAITALEGLKGDLAGRYYKLSEMTEQDQQRLIDDHFLFDKPVSPLLTCAGMARDWPDARGIWHNYDKTFLIWINEEDHTRVISMEKGGNMKRVFERFCRGLKEVERLIQERGWEFMWNERLGYILTCPSNLGTGLRAGVHVRIPKLSKDPRFSKILENLRLQKRGTGGVDTAAVADVYDISNIDRIGRSEVELVQIVIDGVNYLVDCEKKLERGQDIKVPPPLPQFGKK</sequence>
<gene>
    <name type="primary">CKMT2</name>
</gene>
<accession>P17540</accession>
<accession>Q6ICS8</accession>
<accession>Q8N1E1</accession>
<evidence type="ECO:0000250" key="1"/>
<evidence type="ECO:0000250" key="2">
    <source>
        <dbReference type="UniProtKB" id="P09605"/>
    </source>
</evidence>
<evidence type="ECO:0000250" key="3">
    <source>
        <dbReference type="UniProtKB" id="Q6P8J7"/>
    </source>
</evidence>
<evidence type="ECO:0000255" key="4">
    <source>
        <dbReference type="PROSITE-ProRule" id="PRU00842"/>
    </source>
</evidence>
<evidence type="ECO:0000255" key="5">
    <source>
        <dbReference type="PROSITE-ProRule" id="PRU00843"/>
    </source>
</evidence>
<evidence type="ECO:0000255" key="6">
    <source>
        <dbReference type="PROSITE-ProRule" id="PRU10029"/>
    </source>
</evidence>
<evidence type="ECO:0000269" key="7">
    <source>
    </source>
</evidence>
<evidence type="ECO:0000269" key="8">
    <source ref="5"/>
</evidence>
<evidence type="ECO:0000305" key="9"/>
<evidence type="ECO:0007829" key="10">
    <source>
        <dbReference type="PDB" id="4Z9M"/>
    </source>
</evidence>
<name>KCRS_HUMAN</name>
<organism>
    <name type="scientific">Homo sapiens</name>
    <name type="common">Human</name>
    <dbReference type="NCBI Taxonomy" id="9606"/>
    <lineage>
        <taxon>Eukaryota</taxon>
        <taxon>Metazoa</taxon>
        <taxon>Chordata</taxon>
        <taxon>Craniata</taxon>
        <taxon>Vertebrata</taxon>
        <taxon>Euteleostomi</taxon>
        <taxon>Mammalia</taxon>
        <taxon>Eutheria</taxon>
        <taxon>Euarchontoglires</taxon>
        <taxon>Primates</taxon>
        <taxon>Haplorrhini</taxon>
        <taxon>Catarrhini</taxon>
        <taxon>Hominidae</taxon>
        <taxon>Homo</taxon>
    </lineage>
</organism>
<protein>
    <recommendedName>
        <fullName>Creatine kinase S-type, mitochondrial</fullName>
        <ecNumber>2.7.3.2</ecNumber>
    </recommendedName>
    <alternativeName>
        <fullName>Basic-type mitochondrial creatine kinase</fullName>
        <shortName>Mib-CK</shortName>
    </alternativeName>
    <alternativeName>
        <fullName>Sarcomeric mitochondrial creatine kinase</fullName>
        <shortName>S-MtCK</shortName>
    </alternativeName>
</protein>
<proteinExistence type="evidence at protein level"/>
<comment type="function">
    <text>Reversibly catalyzes the transfer of phosphate between ATP and various phosphogens (e.g. creatine phosphate). Creatine kinase isoenzymes play a central role in energy transduction in tissues with large, fluctuating energy demands, such as skeletal muscle, heart, brain and spermatozoa.</text>
</comment>
<comment type="catalytic activity">
    <reaction evidence="6">
        <text>creatine + ATP = N-phosphocreatine + ADP + H(+)</text>
        <dbReference type="Rhea" id="RHEA:17157"/>
        <dbReference type="ChEBI" id="CHEBI:15378"/>
        <dbReference type="ChEBI" id="CHEBI:30616"/>
        <dbReference type="ChEBI" id="CHEBI:57947"/>
        <dbReference type="ChEBI" id="CHEBI:58092"/>
        <dbReference type="ChEBI" id="CHEBI:456216"/>
        <dbReference type="EC" id="2.7.3.2"/>
    </reaction>
</comment>
<comment type="subunit">
    <text evidence="8">Exists as an octamer composed of four CKMT2 homodimers.</text>
</comment>
<comment type="interaction">
    <interactant intactId="EBI-712973">
        <id>P17540</id>
    </interactant>
    <interactant intactId="EBI-712959">
        <id>O15182</id>
        <label>CETN3</label>
    </interactant>
    <organismsDiffer>false</organismsDiffer>
    <experiments>3</experiments>
</comment>
<comment type="interaction">
    <interactant intactId="EBI-712973">
        <id>P17540</id>
    </interactant>
    <interactant intactId="EBI-1050662">
        <id>P12532</id>
        <label>CKMT1B</label>
    </interactant>
    <organismsDiffer>false</organismsDiffer>
    <experiments>2</experiments>
</comment>
<comment type="interaction">
    <interactant intactId="EBI-712973">
        <id>P17540</id>
    </interactant>
    <interactant intactId="EBI-739890">
        <id>Q9P2K6</id>
        <label>KLHL42</label>
    </interactant>
    <organismsDiffer>false</organismsDiffer>
    <experiments>3</experiments>
</comment>
<comment type="interaction">
    <interactant intactId="EBI-712973">
        <id>P17540</id>
    </interactant>
    <interactant intactId="EBI-11742836">
        <id>Q16656-4</id>
        <label>NRF1</label>
    </interactant>
    <organismsDiffer>false</organismsDiffer>
    <experiments>3</experiments>
</comment>
<comment type="interaction">
    <interactant intactId="EBI-712973">
        <id>P17540</id>
    </interactant>
    <interactant intactId="EBI-10181968">
        <id>Q7Z4N8</id>
        <label>P4HA3</label>
    </interactant>
    <organismsDiffer>false</organismsDiffer>
    <experiments>3</experiments>
</comment>
<comment type="subcellular location">
    <subcellularLocation>
        <location>Mitochondrion inner membrane</location>
        <topology>Peripheral membrane protein</topology>
        <orientation>Intermembrane side</orientation>
    </subcellularLocation>
</comment>
<comment type="tissue specificity">
    <text>Sarcomere-specific. Found only in heart and skeletal muscles.</text>
</comment>
<comment type="miscellaneous">
    <text>Mitochondrial creatine kinase binds cardiolipin.</text>
</comment>
<comment type="similarity">
    <text evidence="4 5">Belongs to the ATP:guanido phosphotransferase family.</text>
</comment>
<reference key="1">
    <citation type="journal article" date="1990" name="J. Biol. Chem.">
        <title>Separate nuclear genes encode sarcomere-specific and ubiquitous human mitochondrial creatine kinase isoenzymes.</title>
        <authorList>
            <person name="Haas R.C."/>
            <person name="Strauss A.W."/>
        </authorList>
    </citation>
    <scope>NUCLEOTIDE SEQUENCE [MRNA]</scope>
    <source>
        <tissue>Heart</tissue>
    </source>
</reference>
<reference key="2">
    <citation type="submission" date="2004-05" db="EMBL/GenBank/DDBJ databases">
        <title>Cloning of human full open reading frames in Gateway(TM) system entry vector (pDONR201).</title>
        <authorList>
            <person name="Ebert L."/>
            <person name="Schick M."/>
            <person name="Neubert P."/>
            <person name="Schatten R."/>
            <person name="Henze S."/>
            <person name="Korn B."/>
        </authorList>
    </citation>
    <scope>NUCLEOTIDE SEQUENCE [LARGE SCALE MRNA]</scope>
</reference>
<reference key="3">
    <citation type="journal article" date="2004" name="Genome Res.">
        <title>The status, quality, and expansion of the NIH full-length cDNA project: the Mammalian Gene Collection (MGC).</title>
        <authorList>
            <consortium name="The MGC Project Team"/>
        </authorList>
    </citation>
    <scope>NUCLEOTIDE SEQUENCE [LARGE SCALE MRNA]</scope>
    <source>
        <tissue>Brain</tissue>
    </source>
</reference>
<reference key="4">
    <citation type="journal article" date="1989" name="J. Biol. Chem.">
        <title>Isolation and characterization of the gene and cDNA encoding human mitochondrial creatine kinase.</title>
        <authorList>
            <person name="Haas R.C."/>
            <person name="Korenfeld C."/>
            <person name="Zhang Z."/>
            <person name="Perryman B."/>
            <person name="Roman D."/>
            <person name="Strauss A.W."/>
        </authorList>
    </citation>
    <scope>PROTEIN SEQUENCE OF 40-65</scope>
</reference>
<reference key="5">
    <citation type="submission" date="2006-04" db="PDB data bank">
        <title>Crystal structure of human sarcomeric mitochondrial creatine kinase.</title>
        <authorList>
            <consortium name="Structural genomics consortium (SGC)"/>
        </authorList>
    </citation>
    <scope>X-RAY CRYSTALLOGRAPHY (2.10 ANGSTROMS) OF 27-416 IN COMPLEX WITH ADP</scope>
</reference>
<keyword id="KW-0002">3D-structure</keyword>
<keyword id="KW-0067">ATP-binding</keyword>
<keyword id="KW-0903">Direct protein sequencing</keyword>
<keyword id="KW-0418">Kinase</keyword>
<keyword id="KW-0472">Membrane</keyword>
<keyword id="KW-0496">Mitochondrion</keyword>
<keyword id="KW-0999">Mitochondrion inner membrane</keyword>
<keyword id="KW-0547">Nucleotide-binding</keyword>
<keyword id="KW-0597">Phosphoprotein</keyword>
<keyword id="KW-1267">Proteomics identification</keyword>
<keyword id="KW-1185">Reference proteome</keyword>
<keyword id="KW-0808">Transferase</keyword>
<keyword id="KW-0809">Transit peptide</keyword>